<evidence type="ECO:0000255" key="1">
    <source>
        <dbReference type="HAMAP-Rule" id="MF_00016"/>
    </source>
</evidence>
<evidence type="ECO:0000305" key="2"/>
<reference key="1">
    <citation type="journal article" date="2006" name="Proc. Natl. Acad. Sci. U.S.A.">
        <title>Molecular genetic anatomy of inter- and intraserotype variation in the human bacterial pathogen group A Streptococcus.</title>
        <authorList>
            <person name="Beres S.B."/>
            <person name="Richter E.W."/>
            <person name="Nagiec M.J."/>
            <person name="Sumby P."/>
            <person name="Porcella S.F."/>
            <person name="DeLeo F.R."/>
            <person name="Musser J.M."/>
        </authorList>
    </citation>
    <scope>NUCLEOTIDE SEQUENCE [LARGE SCALE GENOMIC DNA]</scope>
    <source>
        <strain>MGAS9429</strain>
    </source>
</reference>
<proteinExistence type="inferred from homology"/>
<dbReference type="EC" id="3.6.4.-" evidence="1"/>
<dbReference type="EMBL" id="CP000259">
    <property type="protein sequence ID" value="ABF31224.1"/>
    <property type="status" value="ALT_INIT"/>
    <property type="molecule type" value="Genomic_DNA"/>
</dbReference>
<dbReference type="RefSeq" id="WP_002987726.1">
    <property type="nucleotide sequence ID" value="NC_008021.1"/>
</dbReference>
<dbReference type="SMR" id="Q1JP25"/>
<dbReference type="KEGG" id="spk:MGAS9429_Spy0036"/>
<dbReference type="HOGENOM" id="CLU_055599_1_0_9"/>
<dbReference type="Proteomes" id="UP000002433">
    <property type="component" value="Chromosome"/>
</dbReference>
<dbReference type="GO" id="GO:0005737">
    <property type="term" value="C:cytoplasm"/>
    <property type="evidence" value="ECO:0007669"/>
    <property type="project" value="UniProtKB-SubCell"/>
</dbReference>
<dbReference type="GO" id="GO:0048476">
    <property type="term" value="C:Holliday junction resolvase complex"/>
    <property type="evidence" value="ECO:0007669"/>
    <property type="project" value="UniProtKB-UniRule"/>
</dbReference>
<dbReference type="GO" id="GO:0005524">
    <property type="term" value="F:ATP binding"/>
    <property type="evidence" value="ECO:0007669"/>
    <property type="project" value="UniProtKB-UniRule"/>
</dbReference>
<dbReference type="GO" id="GO:0016887">
    <property type="term" value="F:ATP hydrolysis activity"/>
    <property type="evidence" value="ECO:0007669"/>
    <property type="project" value="InterPro"/>
</dbReference>
<dbReference type="GO" id="GO:0000400">
    <property type="term" value="F:four-way junction DNA binding"/>
    <property type="evidence" value="ECO:0007669"/>
    <property type="project" value="UniProtKB-UniRule"/>
</dbReference>
<dbReference type="GO" id="GO:0009378">
    <property type="term" value="F:four-way junction helicase activity"/>
    <property type="evidence" value="ECO:0007669"/>
    <property type="project" value="InterPro"/>
</dbReference>
<dbReference type="GO" id="GO:0006310">
    <property type="term" value="P:DNA recombination"/>
    <property type="evidence" value="ECO:0007669"/>
    <property type="project" value="UniProtKB-UniRule"/>
</dbReference>
<dbReference type="GO" id="GO:0006281">
    <property type="term" value="P:DNA repair"/>
    <property type="evidence" value="ECO:0007669"/>
    <property type="project" value="UniProtKB-UniRule"/>
</dbReference>
<dbReference type="CDD" id="cd00009">
    <property type="entry name" value="AAA"/>
    <property type="match status" value="1"/>
</dbReference>
<dbReference type="Gene3D" id="1.10.8.60">
    <property type="match status" value="1"/>
</dbReference>
<dbReference type="Gene3D" id="3.40.50.300">
    <property type="entry name" value="P-loop containing nucleotide triphosphate hydrolases"/>
    <property type="match status" value="1"/>
</dbReference>
<dbReference type="Gene3D" id="1.10.10.10">
    <property type="entry name" value="Winged helix-like DNA-binding domain superfamily/Winged helix DNA-binding domain"/>
    <property type="match status" value="1"/>
</dbReference>
<dbReference type="HAMAP" id="MF_00016">
    <property type="entry name" value="DNA_HJ_migration_RuvB"/>
    <property type="match status" value="1"/>
</dbReference>
<dbReference type="InterPro" id="IPR003593">
    <property type="entry name" value="AAA+_ATPase"/>
</dbReference>
<dbReference type="InterPro" id="IPR041445">
    <property type="entry name" value="AAA_lid_4"/>
</dbReference>
<dbReference type="InterPro" id="IPR004605">
    <property type="entry name" value="DNA_helicase_Holl-junc_RuvB"/>
</dbReference>
<dbReference type="InterPro" id="IPR027417">
    <property type="entry name" value="P-loop_NTPase"/>
</dbReference>
<dbReference type="InterPro" id="IPR008824">
    <property type="entry name" value="RuvB-like_N"/>
</dbReference>
<dbReference type="InterPro" id="IPR008823">
    <property type="entry name" value="RuvB_C"/>
</dbReference>
<dbReference type="InterPro" id="IPR036388">
    <property type="entry name" value="WH-like_DNA-bd_sf"/>
</dbReference>
<dbReference type="InterPro" id="IPR036390">
    <property type="entry name" value="WH_DNA-bd_sf"/>
</dbReference>
<dbReference type="NCBIfam" id="NF000868">
    <property type="entry name" value="PRK00080.1"/>
    <property type="match status" value="1"/>
</dbReference>
<dbReference type="NCBIfam" id="TIGR00635">
    <property type="entry name" value="ruvB"/>
    <property type="match status" value="1"/>
</dbReference>
<dbReference type="PANTHER" id="PTHR42848">
    <property type="match status" value="1"/>
</dbReference>
<dbReference type="PANTHER" id="PTHR42848:SF1">
    <property type="entry name" value="HOLLIDAY JUNCTION BRANCH MIGRATION COMPLEX SUBUNIT RUVB"/>
    <property type="match status" value="1"/>
</dbReference>
<dbReference type="Pfam" id="PF17864">
    <property type="entry name" value="AAA_lid_4"/>
    <property type="match status" value="1"/>
</dbReference>
<dbReference type="Pfam" id="PF05491">
    <property type="entry name" value="RuvB_C"/>
    <property type="match status" value="1"/>
</dbReference>
<dbReference type="Pfam" id="PF05496">
    <property type="entry name" value="RuvB_N"/>
    <property type="match status" value="1"/>
</dbReference>
<dbReference type="SMART" id="SM00382">
    <property type="entry name" value="AAA"/>
    <property type="match status" value="1"/>
</dbReference>
<dbReference type="SUPFAM" id="SSF52540">
    <property type="entry name" value="P-loop containing nucleoside triphosphate hydrolases"/>
    <property type="match status" value="1"/>
</dbReference>
<dbReference type="SUPFAM" id="SSF46785">
    <property type="entry name" value="Winged helix' DNA-binding domain"/>
    <property type="match status" value="1"/>
</dbReference>
<gene>
    <name evidence="1" type="primary">ruvB</name>
    <name type="ordered locus">MGAS9429_Spy0036</name>
</gene>
<name>RUVB_STRPC</name>
<accession>Q1JP25</accession>
<keyword id="KW-0067">ATP-binding</keyword>
<keyword id="KW-0963">Cytoplasm</keyword>
<keyword id="KW-0227">DNA damage</keyword>
<keyword id="KW-0233">DNA recombination</keyword>
<keyword id="KW-0234">DNA repair</keyword>
<keyword id="KW-0238">DNA-binding</keyword>
<keyword id="KW-0378">Hydrolase</keyword>
<keyword id="KW-0547">Nucleotide-binding</keyword>
<organism>
    <name type="scientific">Streptococcus pyogenes serotype M12 (strain MGAS9429)</name>
    <dbReference type="NCBI Taxonomy" id="370551"/>
    <lineage>
        <taxon>Bacteria</taxon>
        <taxon>Bacillati</taxon>
        <taxon>Bacillota</taxon>
        <taxon>Bacilli</taxon>
        <taxon>Lactobacillales</taxon>
        <taxon>Streptococcaceae</taxon>
        <taxon>Streptococcus</taxon>
    </lineage>
</organism>
<sequence length="332" mass="37585">MARILDNDVMGNEEFSDRTLRPQYLREYIGQDKVKEQFAIFIEAAKRRDESLDHVLLFGPPGLGKTTMAFVIANELGVNLKQTSGPAVEKAGDLVAILNELEPGDILFIDEIHRMPMSVEEVLYSAMEDFYIDIMIGAGDTSRSIHLDLPPFTLIGATTRAGMLSNPLRARFGITGHMEYYQEKDLTEIVERTATIFEIKIDHEAARKLACRSRGTPRIANRLLKRVRDYAQIIGDGIITAQITDRALTMLDVDREGLDYIDQKILRTMIEMYQGGPVGLGTLSVNIAEERNTVEEMYEPYLIQKGFLMRTRTGRVATQKAYRHLGYPYQNT</sequence>
<comment type="function">
    <text evidence="1">The RuvA-RuvB-RuvC complex processes Holliday junction (HJ) DNA during genetic recombination and DNA repair, while the RuvA-RuvB complex plays an important role in the rescue of blocked DNA replication forks via replication fork reversal (RFR). RuvA specifically binds to HJ cruciform DNA, conferring on it an open structure. The RuvB hexamer acts as an ATP-dependent pump, pulling dsDNA into and through the RuvAB complex. RuvB forms 2 homohexamers on either side of HJ DNA bound by 1 or 2 RuvA tetramers; 4 subunits per hexamer contact DNA at a time. Coordinated motions by a converter formed by DNA-disengaged RuvB subunits stimulates ATP hydrolysis and nucleotide exchange. Immobilization of the converter enables RuvB to convert the ATP-contained energy into a lever motion, pulling 2 nucleotides of DNA out of the RuvA tetramer per ATP hydrolyzed, thus driving DNA branch migration. The RuvB motors rotate together with the DNA substrate, which together with the progressing nucleotide cycle form the mechanistic basis for DNA recombination by continuous HJ branch migration. Branch migration allows RuvC to scan DNA until it finds its consensus sequence, where it cleaves and resolves cruciform DNA.</text>
</comment>
<comment type="catalytic activity">
    <reaction evidence="1">
        <text>ATP + H2O = ADP + phosphate + H(+)</text>
        <dbReference type="Rhea" id="RHEA:13065"/>
        <dbReference type="ChEBI" id="CHEBI:15377"/>
        <dbReference type="ChEBI" id="CHEBI:15378"/>
        <dbReference type="ChEBI" id="CHEBI:30616"/>
        <dbReference type="ChEBI" id="CHEBI:43474"/>
        <dbReference type="ChEBI" id="CHEBI:456216"/>
    </reaction>
</comment>
<comment type="subunit">
    <text evidence="1">Homohexamer. Forms an RuvA(8)-RuvB(12)-Holliday junction (HJ) complex. HJ DNA is sandwiched between 2 RuvA tetramers; dsDNA enters through RuvA and exits via RuvB. An RuvB hexamer assembles on each DNA strand where it exits the tetramer. Each RuvB hexamer is contacted by two RuvA subunits (via domain III) on 2 adjacent RuvB subunits; this complex drives branch migration. In the full resolvosome a probable DNA-RuvA(4)-RuvB(12)-RuvC(2) complex forms which resolves the HJ.</text>
</comment>
<comment type="subcellular location">
    <subcellularLocation>
        <location evidence="1">Cytoplasm</location>
    </subcellularLocation>
</comment>
<comment type="domain">
    <text evidence="1">Has 3 domains, the large (RuvB-L) and small ATPase (RuvB-S) domains and the C-terminal head (RuvB-H) domain. The head domain binds DNA, while the ATPase domains jointly bind ATP, ADP or are empty depending on the state of the subunit in the translocation cycle. During a single DNA translocation step the structure of each domain remains the same, but their relative positions change.</text>
</comment>
<comment type="similarity">
    <text evidence="1">Belongs to the RuvB family.</text>
</comment>
<comment type="sequence caution" evidence="2">
    <conflict type="erroneous initiation">
        <sequence resource="EMBL-CDS" id="ABF31224"/>
    </conflict>
</comment>
<protein>
    <recommendedName>
        <fullName evidence="1">Holliday junction branch migration complex subunit RuvB</fullName>
        <ecNumber evidence="1">3.6.4.-</ecNumber>
    </recommendedName>
</protein>
<feature type="chain" id="PRO_0000322843" description="Holliday junction branch migration complex subunit RuvB">
    <location>
        <begin position="1"/>
        <end position="332"/>
    </location>
</feature>
<feature type="region of interest" description="Large ATPase domain (RuvB-L)" evidence="1">
    <location>
        <begin position="1"/>
        <end position="181"/>
    </location>
</feature>
<feature type="region of interest" description="Small ATPAse domain (RuvB-S)" evidence="1">
    <location>
        <begin position="182"/>
        <end position="252"/>
    </location>
</feature>
<feature type="region of interest" description="Head domain (RuvB-H)" evidence="1">
    <location>
        <begin position="255"/>
        <end position="332"/>
    </location>
</feature>
<feature type="binding site" evidence="1">
    <location>
        <position position="20"/>
    </location>
    <ligand>
        <name>ATP</name>
        <dbReference type="ChEBI" id="CHEBI:30616"/>
    </ligand>
</feature>
<feature type="binding site" evidence="1">
    <location>
        <position position="21"/>
    </location>
    <ligand>
        <name>ATP</name>
        <dbReference type="ChEBI" id="CHEBI:30616"/>
    </ligand>
</feature>
<feature type="binding site" evidence="1">
    <location>
        <position position="62"/>
    </location>
    <ligand>
        <name>ATP</name>
        <dbReference type="ChEBI" id="CHEBI:30616"/>
    </ligand>
</feature>
<feature type="binding site" evidence="1">
    <location>
        <position position="65"/>
    </location>
    <ligand>
        <name>ATP</name>
        <dbReference type="ChEBI" id="CHEBI:30616"/>
    </ligand>
</feature>
<feature type="binding site" evidence="1">
    <location>
        <position position="66"/>
    </location>
    <ligand>
        <name>ATP</name>
        <dbReference type="ChEBI" id="CHEBI:30616"/>
    </ligand>
</feature>
<feature type="binding site" evidence="1">
    <location>
        <position position="66"/>
    </location>
    <ligand>
        <name>Mg(2+)</name>
        <dbReference type="ChEBI" id="CHEBI:18420"/>
    </ligand>
</feature>
<feature type="binding site" evidence="1">
    <location>
        <position position="67"/>
    </location>
    <ligand>
        <name>ATP</name>
        <dbReference type="ChEBI" id="CHEBI:30616"/>
    </ligand>
</feature>
<feature type="binding site" evidence="1">
    <location>
        <begin position="128"/>
        <end position="130"/>
    </location>
    <ligand>
        <name>ATP</name>
        <dbReference type="ChEBI" id="CHEBI:30616"/>
    </ligand>
</feature>
<feature type="binding site" evidence="1">
    <location>
        <position position="171"/>
    </location>
    <ligand>
        <name>ATP</name>
        <dbReference type="ChEBI" id="CHEBI:30616"/>
    </ligand>
</feature>
<feature type="binding site" evidence="1">
    <location>
        <position position="181"/>
    </location>
    <ligand>
        <name>ATP</name>
        <dbReference type="ChEBI" id="CHEBI:30616"/>
    </ligand>
</feature>
<feature type="binding site" evidence="1">
    <location>
        <position position="218"/>
    </location>
    <ligand>
        <name>ATP</name>
        <dbReference type="ChEBI" id="CHEBI:30616"/>
    </ligand>
</feature>
<feature type="binding site" evidence="1">
    <location>
        <position position="291"/>
    </location>
    <ligand>
        <name>DNA</name>
        <dbReference type="ChEBI" id="CHEBI:16991"/>
    </ligand>
</feature>
<feature type="binding site" evidence="1">
    <location>
        <position position="310"/>
    </location>
    <ligand>
        <name>DNA</name>
        <dbReference type="ChEBI" id="CHEBI:16991"/>
    </ligand>
</feature>
<feature type="binding site" evidence="1">
    <location>
        <position position="312"/>
    </location>
    <ligand>
        <name>DNA</name>
        <dbReference type="ChEBI" id="CHEBI:16991"/>
    </ligand>
</feature>
<feature type="binding site" evidence="1">
    <location>
        <position position="315"/>
    </location>
    <ligand>
        <name>DNA</name>
        <dbReference type="ChEBI" id="CHEBI:16991"/>
    </ligand>
</feature>